<accession>O16966</accession>
<evidence type="ECO:0000255" key="1">
    <source>
        <dbReference type="PROSITE-ProRule" id="PRU00407"/>
    </source>
</evidence>
<evidence type="ECO:0000255" key="2">
    <source>
        <dbReference type="PROSITE-ProRule" id="PRU01189"/>
    </source>
</evidence>
<evidence type="ECO:0000305" key="3"/>
<name>NH106_CAEEL</name>
<sequence>MQTTCEICEVPAHGIHFGAITCRGCAAFFRRAVNTKTNRKSCKYSSNCTNFTGKFPQCKSCRMRKCIKMGMMPEKVKVMQPISQSLEIFVSRPNLILFTNNYDKTRNYIDVSNLITRGLEILKQGFPTPLGIGKTNLERMASGVEFSTAESKIVDVVTGKSVSMVWEFDFISTAKWLTRLQDFCTLPMRIQMQLLQTIWHVWSRMYKVVKSSELRKKHADSSNLFQVLDQFHVNLGTTKLDVSWLTTYSYEEIKYFLYGIDDDIYLQSAITAASKLELTDVELTYMAAQTCFQYAQNRFAGTEIAEVCAKFQEILANDLHTYYTKDHKRTSNYAGKLSQMLKCVQEIQKSIRTTRERTTIARTFDIYITDFSNPEMFIDSGC</sequence>
<reference key="1">
    <citation type="journal article" date="2005" name="J. Mol. Evol.">
        <title>Explosive lineage-specific expansion of the orphan nuclear receptor HNF4 in nematodes.</title>
        <authorList>
            <person name="Robinson-Rechavi M."/>
            <person name="Maina C.V."/>
            <person name="Gissendanner C.R."/>
            <person name="Laudet V."/>
            <person name="Sluder A."/>
        </authorList>
    </citation>
    <scope>NUCLEOTIDE SEQUENCE [MRNA]</scope>
</reference>
<reference key="2">
    <citation type="journal article" date="1998" name="Science">
        <title>Genome sequence of the nematode C. elegans: a platform for investigating biology.</title>
        <authorList>
            <consortium name="The C. elegans sequencing consortium"/>
        </authorList>
    </citation>
    <scope>NUCLEOTIDE SEQUENCE [LARGE SCALE GENOMIC DNA]</scope>
    <source>
        <strain>Bristol N2</strain>
    </source>
</reference>
<dbReference type="EMBL" id="AY204190">
    <property type="protein sequence ID" value="AAO39194.1"/>
    <property type="molecule type" value="mRNA"/>
</dbReference>
<dbReference type="EMBL" id="FO081653">
    <property type="protein sequence ID" value="CCD73119.1"/>
    <property type="molecule type" value="Genomic_DNA"/>
</dbReference>
<dbReference type="RefSeq" id="NP_503219.1">
    <property type="nucleotide sequence ID" value="NM_070818.6"/>
</dbReference>
<dbReference type="SMR" id="O16966"/>
<dbReference type="FunCoup" id="O16966">
    <property type="interactions" value="936"/>
</dbReference>
<dbReference type="STRING" id="6239.T01G6.4.1"/>
<dbReference type="PaxDb" id="6239-T01G6.4"/>
<dbReference type="EnsemblMetazoa" id="T01G6.4.1">
    <property type="protein sequence ID" value="T01G6.4.1"/>
    <property type="gene ID" value="WBGene00003696"/>
</dbReference>
<dbReference type="GeneID" id="178571"/>
<dbReference type="KEGG" id="cel:CELE_T01G6.4"/>
<dbReference type="UCSC" id="T01G6.4">
    <property type="organism name" value="c. elegans"/>
</dbReference>
<dbReference type="AGR" id="WB:WBGene00003696"/>
<dbReference type="CTD" id="178571"/>
<dbReference type="WormBase" id="T01G6.4">
    <property type="protein sequence ID" value="CE27433"/>
    <property type="gene ID" value="WBGene00003696"/>
    <property type="gene designation" value="nhr-106"/>
</dbReference>
<dbReference type="eggNOG" id="KOG3575">
    <property type="taxonomic scope" value="Eukaryota"/>
</dbReference>
<dbReference type="GeneTree" id="ENSGT00970000195869"/>
<dbReference type="HOGENOM" id="CLU_007368_7_1_1"/>
<dbReference type="InParanoid" id="O16966"/>
<dbReference type="OMA" id="HTFDIFI"/>
<dbReference type="OrthoDB" id="5774400at2759"/>
<dbReference type="PhylomeDB" id="O16966"/>
<dbReference type="PRO" id="PR:O16966"/>
<dbReference type="Proteomes" id="UP000001940">
    <property type="component" value="Chromosome V"/>
</dbReference>
<dbReference type="Bgee" id="WBGene00003696">
    <property type="expression patterns" value="Expressed in adult organism and 1 other cell type or tissue"/>
</dbReference>
<dbReference type="GO" id="GO:0005634">
    <property type="term" value="C:nucleus"/>
    <property type="evidence" value="ECO:0007669"/>
    <property type="project" value="UniProtKB-SubCell"/>
</dbReference>
<dbReference type="GO" id="GO:0003700">
    <property type="term" value="F:DNA-binding transcription factor activity"/>
    <property type="evidence" value="ECO:0007669"/>
    <property type="project" value="InterPro"/>
</dbReference>
<dbReference type="GO" id="GO:0000978">
    <property type="term" value="F:RNA polymerase II cis-regulatory region sequence-specific DNA binding"/>
    <property type="evidence" value="ECO:0007669"/>
    <property type="project" value="InterPro"/>
</dbReference>
<dbReference type="GO" id="GO:0008270">
    <property type="term" value="F:zinc ion binding"/>
    <property type="evidence" value="ECO:0007669"/>
    <property type="project" value="UniProtKB-KW"/>
</dbReference>
<dbReference type="CDD" id="cd06960">
    <property type="entry name" value="NR_DBD_HNF4A"/>
    <property type="match status" value="1"/>
</dbReference>
<dbReference type="Gene3D" id="3.30.50.10">
    <property type="entry name" value="Erythroid Transcription Factor GATA-1, subunit A"/>
    <property type="match status" value="1"/>
</dbReference>
<dbReference type="Gene3D" id="1.10.565.10">
    <property type="entry name" value="Retinoid X Receptor"/>
    <property type="match status" value="1"/>
</dbReference>
<dbReference type="InterPro" id="IPR051152">
    <property type="entry name" value="C.elegans_Orphan_NR"/>
</dbReference>
<dbReference type="InterPro" id="IPR049636">
    <property type="entry name" value="HNF4-like_DBD"/>
</dbReference>
<dbReference type="InterPro" id="IPR035500">
    <property type="entry name" value="NHR-like_dom_sf"/>
</dbReference>
<dbReference type="InterPro" id="IPR000536">
    <property type="entry name" value="Nucl_hrmn_rcpt_lig-bd"/>
</dbReference>
<dbReference type="InterPro" id="IPR001628">
    <property type="entry name" value="Znf_hrmn_rcpt"/>
</dbReference>
<dbReference type="InterPro" id="IPR013088">
    <property type="entry name" value="Znf_NHR/GATA"/>
</dbReference>
<dbReference type="PANTHER" id="PTHR45680">
    <property type="entry name" value="NUCLEAR HORMONE RECEPTOR FAMILY"/>
    <property type="match status" value="1"/>
</dbReference>
<dbReference type="PANTHER" id="PTHR45680:SF24">
    <property type="entry name" value="NUCLEAR HORMONE RECEPTOR FAMILY-RELATED"/>
    <property type="match status" value="1"/>
</dbReference>
<dbReference type="Pfam" id="PF00104">
    <property type="entry name" value="Hormone_recep"/>
    <property type="match status" value="1"/>
</dbReference>
<dbReference type="Pfam" id="PF00105">
    <property type="entry name" value="zf-C4"/>
    <property type="match status" value="1"/>
</dbReference>
<dbReference type="PRINTS" id="PR00047">
    <property type="entry name" value="STROIDFINGER"/>
</dbReference>
<dbReference type="SMART" id="SM00430">
    <property type="entry name" value="HOLI"/>
    <property type="match status" value="1"/>
</dbReference>
<dbReference type="SMART" id="SM00399">
    <property type="entry name" value="ZnF_C4"/>
    <property type="match status" value="1"/>
</dbReference>
<dbReference type="SUPFAM" id="SSF57716">
    <property type="entry name" value="Glucocorticoid receptor-like (DNA-binding domain)"/>
    <property type="match status" value="1"/>
</dbReference>
<dbReference type="SUPFAM" id="SSF48508">
    <property type="entry name" value="Nuclear receptor ligand-binding domain"/>
    <property type="match status" value="1"/>
</dbReference>
<dbReference type="PROSITE" id="PS51843">
    <property type="entry name" value="NR_LBD"/>
    <property type="match status" value="1"/>
</dbReference>
<dbReference type="PROSITE" id="PS00031">
    <property type="entry name" value="NUCLEAR_REC_DBD_1"/>
    <property type="match status" value="1"/>
</dbReference>
<dbReference type="PROSITE" id="PS51030">
    <property type="entry name" value="NUCLEAR_REC_DBD_2"/>
    <property type="match status" value="1"/>
</dbReference>
<protein>
    <recommendedName>
        <fullName>Nuclear hormone receptor family member nhr-106</fullName>
    </recommendedName>
</protein>
<keyword id="KW-0238">DNA-binding</keyword>
<keyword id="KW-0479">Metal-binding</keyword>
<keyword id="KW-0539">Nucleus</keyword>
<keyword id="KW-0675">Receptor</keyword>
<keyword id="KW-1185">Reference proteome</keyword>
<keyword id="KW-0804">Transcription</keyword>
<keyword id="KW-0805">Transcription regulation</keyword>
<keyword id="KW-0862">Zinc</keyword>
<keyword id="KW-0863">Zinc-finger</keyword>
<gene>
    <name type="primary">nhr-106</name>
    <name type="ORF">T01G6.4</name>
</gene>
<feature type="chain" id="PRO_0000223587" description="Nuclear hormone receptor family member nhr-106">
    <location>
        <begin position="1"/>
        <end position="382"/>
    </location>
</feature>
<feature type="domain" description="NR LBD" evidence="2">
    <location>
        <begin position="110"/>
        <end position="380"/>
    </location>
</feature>
<feature type="DNA-binding region" description="Nuclear receptor" evidence="1">
    <location>
        <begin position="2"/>
        <end position="78"/>
    </location>
</feature>
<feature type="zinc finger region" description="NR C4-type" evidence="1">
    <location>
        <begin position="5"/>
        <end position="25"/>
    </location>
</feature>
<feature type="zinc finger region" description="NR C4-type" evidence="1">
    <location>
        <begin position="42"/>
        <end position="61"/>
    </location>
</feature>
<proteinExistence type="evidence at transcript level"/>
<comment type="function">
    <text>Orphan nuclear receptor.</text>
</comment>
<comment type="subcellular location">
    <subcellularLocation>
        <location evidence="1">Nucleus</location>
    </subcellularLocation>
</comment>
<comment type="similarity">
    <text evidence="3">Belongs to the nuclear hormone receptor family.</text>
</comment>
<organism>
    <name type="scientific">Caenorhabditis elegans</name>
    <dbReference type="NCBI Taxonomy" id="6239"/>
    <lineage>
        <taxon>Eukaryota</taxon>
        <taxon>Metazoa</taxon>
        <taxon>Ecdysozoa</taxon>
        <taxon>Nematoda</taxon>
        <taxon>Chromadorea</taxon>
        <taxon>Rhabditida</taxon>
        <taxon>Rhabditina</taxon>
        <taxon>Rhabditomorpha</taxon>
        <taxon>Rhabditoidea</taxon>
        <taxon>Rhabditidae</taxon>
        <taxon>Peloderinae</taxon>
        <taxon>Caenorhabditis</taxon>
    </lineage>
</organism>